<organism>
    <name type="scientific">Debaryomyces hansenii (strain ATCC 36239 / CBS 767 / BCRC 21394 / JCM 1990 / NBRC 0083 / IGC 2968)</name>
    <name type="common">Yeast</name>
    <name type="synonym">Torulaspora hansenii</name>
    <dbReference type="NCBI Taxonomy" id="284592"/>
    <lineage>
        <taxon>Eukaryota</taxon>
        <taxon>Fungi</taxon>
        <taxon>Dikarya</taxon>
        <taxon>Ascomycota</taxon>
        <taxon>Saccharomycotina</taxon>
        <taxon>Pichiomycetes</taxon>
        <taxon>Debaryomycetaceae</taxon>
        <taxon>Debaryomyces</taxon>
    </lineage>
</organism>
<gene>
    <name type="primary">UTP25</name>
    <name type="ordered locus">DEHA2A10626g</name>
</gene>
<name>UTP25_DEBHA</name>
<evidence type="ECO:0000250" key="1"/>
<evidence type="ECO:0000256" key="2">
    <source>
        <dbReference type="SAM" id="MobiDB-lite"/>
    </source>
</evidence>
<evidence type="ECO:0000305" key="3"/>
<sequence length="719" mass="83586">MPAPYKRKKHSGKRPEDSHDAKRPKQKHGRQEMRTITRTARRVRRDEEGEEDEQVEENVNEELESQDDDIEDGGDIDDDKGKAYDALLTLLSGDHQEDTKKNTSVRAEPEQTQESESESDEDSGDDEIAGANVDDDKDVDEEGPEEDDGDDDQQDPFEVHFNQVSDTFIEEQEKVLKDKPKWTFADKKSMEDAGYTYTFQVPPNPIKTGGKVKGQSVNNYSIKQRLVSPFEKQHPESLNELEGVLLDSMVKYQDINYVYKTFDNESYKKLYVLHALNHIFKTRDRILKNNNKLHSYQESMKKGKTNIEEPELRDQGFTRPKVLILLPTRNACYEIVELLIKLCGSEQQENRKKFNKQFSSKETPPDSKPEDFKHSFKGNNNDFFCIGVKFTRKSLKLYSSFYSSDIIIASPIGLSMILENPDKKKRQYDFLSSIEVLVVDRANQIEMQNWDHVNTVFKYLNKIPKDFHDADFSRIRMWSINDQANLLRQNLVFSEFSTPNINNIVSSKSSNLSGKLRFKPVTTSKNCIMNSIGLKLKQIFQRFESNSPMTDPESRFKFFINSVLPSLTRSTSYDDGLLIFIPSYYDYLRIKNYMKTSTKFTFASIDEYTSQSKLSRNRQQFASGKIKIMLYTERLHHFRRFEINGVKNLLMYGLPSNPIFYKELVRFIGKSVFREIADLDLSFIKILYSKWDAVALERIVGNERAPVLCNSVNEMYEFR</sequence>
<accession>Q6BYC4</accession>
<proteinExistence type="inferred from homology"/>
<feature type="chain" id="PRO_0000408116" description="U3 small nucleolar RNA-associated protein 25">
    <location>
        <begin position="1"/>
        <end position="719"/>
    </location>
</feature>
<feature type="region of interest" description="Disordered" evidence="2">
    <location>
        <begin position="1"/>
        <end position="157"/>
    </location>
</feature>
<feature type="region of interest" description="Disordered" evidence="2">
    <location>
        <begin position="353"/>
        <end position="374"/>
    </location>
</feature>
<feature type="compositionally biased region" description="Basic residues" evidence="2">
    <location>
        <begin position="1"/>
        <end position="12"/>
    </location>
</feature>
<feature type="compositionally biased region" description="Basic and acidic residues" evidence="2">
    <location>
        <begin position="13"/>
        <end position="35"/>
    </location>
</feature>
<feature type="compositionally biased region" description="Acidic residues" evidence="2">
    <location>
        <begin position="48"/>
        <end position="78"/>
    </location>
</feature>
<feature type="compositionally biased region" description="Acidic residues" evidence="2">
    <location>
        <begin position="111"/>
        <end position="155"/>
    </location>
</feature>
<feature type="compositionally biased region" description="Basic and acidic residues" evidence="2">
    <location>
        <begin position="363"/>
        <end position="374"/>
    </location>
</feature>
<comment type="function">
    <text evidence="1">DEAD-box RNA helicase-like protein required for pre-18S rRNA processing, specifically at sites A0, A1, and A2.</text>
</comment>
<comment type="subunit">
    <text evidence="1">Component of the ribosomal small subunit (SSU) processome composed of at least 40 protein subunits and snoRNA U3.</text>
</comment>
<comment type="subcellular location">
    <subcellularLocation>
        <location evidence="1">Nucleus</location>
        <location evidence="1">Nucleolus</location>
    </subcellularLocation>
</comment>
<comment type="similarity">
    <text evidence="3">Belongs to the UTP25 family.</text>
</comment>
<reference key="1">
    <citation type="journal article" date="2004" name="Nature">
        <title>Genome evolution in yeasts.</title>
        <authorList>
            <person name="Dujon B."/>
            <person name="Sherman D."/>
            <person name="Fischer G."/>
            <person name="Durrens P."/>
            <person name="Casaregola S."/>
            <person name="Lafontaine I."/>
            <person name="de Montigny J."/>
            <person name="Marck C."/>
            <person name="Neuveglise C."/>
            <person name="Talla E."/>
            <person name="Goffard N."/>
            <person name="Frangeul L."/>
            <person name="Aigle M."/>
            <person name="Anthouard V."/>
            <person name="Babour A."/>
            <person name="Barbe V."/>
            <person name="Barnay S."/>
            <person name="Blanchin S."/>
            <person name="Beckerich J.-M."/>
            <person name="Beyne E."/>
            <person name="Bleykasten C."/>
            <person name="Boisrame A."/>
            <person name="Boyer J."/>
            <person name="Cattolico L."/>
            <person name="Confanioleri F."/>
            <person name="de Daruvar A."/>
            <person name="Despons L."/>
            <person name="Fabre E."/>
            <person name="Fairhead C."/>
            <person name="Ferry-Dumazet H."/>
            <person name="Groppi A."/>
            <person name="Hantraye F."/>
            <person name="Hennequin C."/>
            <person name="Jauniaux N."/>
            <person name="Joyet P."/>
            <person name="Kachouri R."/>
            <person name="Kerrest A."/>
            <person name="Koszul R."/>
            <person name="Lemaire M."/>
            <person name="Lesur I."/>
            <person name="Ma L."/>
            <person name="Muller H."/>
            <person name="Nicaud J.-M."/>
            <person name="Nikolski M."/>
            <person name="Oztas S."/>
            <person name="Ozier-Kalogeropoulos O."/>
            <person name="Pellenz S."/>
            <person name="Potier S."/>
            <person name="Richard G.-F."/>
            <person name="Straub M.-L."/>
            <person name="Suleau A."/>
            <person name="Swennen D."/>
            <person name="Tekaia F."/>
            <person name="Wesolowski-Louvel M."/>
            <person name="Westhof E."/>
            <person name="Wirth B."/>
            <person name="Zeniou-Meyer M."/>
            <person name="Zivanovic Y."/>
            <person name="Bolotin-Fukuhara M."/>
            <person name="Thierry A."/>
            <person name="Bouchier C."/>
            <person name="Caudron B."/>
            <person name="Scarpelli C."/>
            <person name="Gaillardin C."/>
            <person name="Weissenbach J."/>
            <person name="Wincker P."/>
            <person name="Souciet J.-L."/>
        </authorList>
    </citation>
    <scope>NUCLEOTIDE SEQUENCE [LARGE SCALE GENOMIC DNA]</scope>
    <source>
        <strain>ATCC 36239 / CBS 767 / BCRC 21394 / JCM 1990 / NBRC 0083 / IGC 2968</strain>
    </source>
</reference>
<keyword id="KW-0539">Nucleus</keyword>
<keyword id="KW-1185">Reference proteome</keyword>
<keyword id="KW-0687">Ribonucleoprotein</keyword>
<keyword id="KW-0690">Ribosome biogenesis</keyword>
<keyword id="KW-0698">rRNA processing</keyword>
<protein>
    <recommendedName>
        <fullName>U3 small nucleolar RNA-associated protein 25</fullName>
        <shortName>U3 snoRNA-associated protein 25</shortName>
    </recommendedName>
    <alternativeName>
        <fullName>U three protein 25</fullName>
    </alternativeName>
</protein>
<dbReference type="EMBL" id="CR382133">
    <property type="protein sequence ID" value="CAG84764.2"/>
    <property type="molecule type" value="Genomic_DNA"/>
</dbReference>
<dbReference type="RefSeq" id="XP_456795.2">
    <property type="nucleotide sequence ID" value="XM_456795.1"/>
</dbReference>
<dbReference type="FunCoup" id="Q6BYC4">
    <property type="interactions" value="1326"/>
</dbReference>
<dbReference type="STRING" id="284592.Q6BYC4"/>
<dbReference type="GeneID" id="2899564"/>
<dbReference type="KEGG" id="dha:DEHA2A10626g"/>
<dbReference type="VEuPathDB" id="FungiDB:DEHA2A10626g"/>
<dbReference type="eggNOG" id="KOG2340">
    <property type="taxonomic scope" value="Eukaryota"/>
</dbReference>
<dbReference type="HOGENOM" id="CLU_018705_0_1_1"/>
<dbReference type="InParanoid" id="Q6BYC4"/>
<dbReference type="OMA" id="GIMIFIP"/>
<dbReference type="OrthoDB" id="10264378at2759"/>
<dbReference type="Proteomes" id="UP000000599">
    <property type="component" value="Chromosome A"/>
</dbReference>
<dbReference type="GO" id="GO:0005730">
    <property type="term" value="C:nucleolus"/>
    <property type="evidence" value="ECO:0007669"/>
    <property type="project" value="UniProtKB-SubCell"/>
</dbReference>
<dbReference type="GO" id="GO:0032040">
    <property type="term" value="C:small-subunit processome"/>
    <property type="evidence" value="ECO:0007669"/>
    <property type="project" value="EnsemblFungi"/>
</dbReference>
<dbReference type="GO" id="GO:0019843">
    <property type="term" value="F:rRNA binding"/>
    <property type="evidence" value="ECO:0007669"/>
    <property type="project" value="EnsemblFungi"/>
</dbReference>
<dbReference type="GO" id="GO:0034511">
    <property type="term" value="F:U3 snoRNA binding"/>
    <property type="evidence" value="ECO:0007669"/>
    <property type="project" value="EnsemblFungi"/>
</dbReference>
<dbReference type="GO" id="GO:0000462">
    <property type="term" value="P:maturation of SSU-rRNA from tricistronic rRNA transcript (SSU-rRNA, 5.8S rRNA, LSU-rRNA)"/>
    <property type="evidence" value="ECO:0007669"/>
    <property type="project" value="EnsemblFungi"/>
</dbReference>
<dbReference type="Gene3D" id="3.40.50.300">
    <property type="entry name" value="P-loop containing nucleotide triphosphate hydrolases"/>
    <property type="match status" value="1"/>
</dbReference>
<dbReference type="InterPro" id="IPR027417">
    <property type="entry name" value="P-loop_NTPase"/>
</dbReference>
<dbReference type="InterPro" id="IPR010678">
    <property type="entry name" value="UTP25"/>
</dbReference>
<dbReference type="InterPro" id="IPR053939">
    <property type="entry name" value="UTP25_C"/>
</dbReference>
<dbReference type="InterPro" id="IPR053940">
    <property type="entry name" value="UTP25_NTPase-like"/>
</dbReference>
<dbReference type="PANTHER" id="PTHR12933">
    <property type="entry name" value="ORF PROTEIN-RELATED"/>
    <property type="match status" value="1"/>
</dbReference>
<dbReference type="PANTHER" id="PTHR12933:SF0">
    <property type="entry name" value="U3 SMALL NUCLEOLAR RNA-ASSOCIATED PROTEIN 25 HOMOLOG"/>
    <property type="match status" value="1"/>
</dbReference>
<dbReference type="Pfam" id="PF06862">
    <property type="entry name" value="Utp25_C"/>
    <property type="match status" value="1"/>
</dbReference>
<dbReference type="Pfam" id="PF22916">
    <property type="entry name" value="UTP25_NTPase-like"/>
    <property type="match status" value="1"/>
</dbReference>